<protein>
    <recommendedName>
        <fullName evidence="1">5-methyltetrahydropteroyltriglutamate--homocysteine methyltransferase</fullName>
        <ecNumber evidence="1">2.1.1.14</ecNumber>
    </recommendedName>
    <alternativeName>
        <fullName evidence="1">Cobalamin-independent methionine synthase</fullName>
    </alternativeName>
    <alternativeName>
        <fullName evidence="1">Methionine synthase, vitamin-B12 independent isozyme</fullName>
    </alternativeName>
</protein>
<proteinExistence type="inferred from homology"/>
<gene>
    <name evidence="1" type="primary">metE</name>
    <name type="ordered locus">HSM_1293</name>
</gene>
<name>METE_HISS2</name>
<sequence>MTTFHVLGFPRVGAKRELKFAQERYWRKELAEQDLLDLAKALREKNWKHQADANADFMAVGDFTFYDHILDLQVATGAIPARFGFDSKNLTLDQYFQLARGNKDQFAIEMTKWFDTNYHYLVPEFHKDTQFKANPTHYVNQIREAKVAGHQVKPVIVGPLTFLWLGKEKGESFNRFELLAQLVPVYVEILNALVAEGTEWIQIDEPALAVDLPKEWVNAYKDVYATLSEKVNAKLLLATYFGSVTEHATLLKELPVDGLHLDLVRAPEQLVAFEDYNKVLSAGVIDGRNIWRANLNTVLDVLEPLKEKLGERLWIAPSCSLLHTPFDLNVETQLQENNPALYSWLAFTLQKVQELSVLKTALEKGRNAVNVELDASQVAADARANSKEIHRPEVAERLANLPKNADQRKSPFGERIKLQNAWLNLPLLPTTSIGSFPQTTEIRRARAAFKKGDLSLEEYENSMKKEIELVVREQEKLDLDVLVHGEPERNDMVEYFGELLDGFAFTKFGWVQSYGSRCVKPPVIYGDVVRPEPMTVRWSKYAQSLTKKVMKGMLTGPVTILQWSFVRNDIPRSTVCKQIGVALSDEVLDLEKAGIKVIQIDEPAIREGLPLKRADWDTYLQWAGEAFRLSSMGVADDTQIHTHMCYSEFNDILPAIAALDADVITIETSRSDMELLTAFGDFKYPNDIGPGVYDIHSPRVPTAEEIEHLLRKALNVVPKERLWVNPDCGLKTRGWSETIAQLEVMMSVTKKLRAELA</sequence>
<comment type="function">
    <text evidence="1">Catalyzes the transfer of a methyl group from 5-methyltetrahydrofolate to homocysteine resulting in methionine formation.</text>
</comment>
<comment type="catalytic activity">
    <reaction evidence="1">
        <text>5-methyltetrahydropteroyltri-L-glutamate + L-homocysteine = tetrahydropteroyltri-L-glutamate + L-methionine</text>
        <dbReference type="Rhea" id="RHEA:21196"/>
        <dbReference type="ChEBI" id="CHEBI:57844"/>
        <dbReference type="ChEBI" id="CHEBI:58140"/>
        <dbReference type="ChEBI" id="CHEBI:58199"/>
        <dbReference type="ChEBI" id="CHEBI:58207"/>
        <dbReference type="EC" id="2.1.1.14"/>
    </reaction>
</comment>
<comment type="cofactor">
    <cofactor evidence="1">
        <name>Zn(2+)</name>
        <dbReference type="ChEBI" id="CHEBI:29105"/>
    </cofactor>
    <text evidence="1">Binds 1 zinc ion per subunit.</text>
</comment>
<comment type="pathway">
    <text evidence="1">Amino-acid biosynthesis; L-methionine biosynthesis via de novo pathway; L-methionine from L-homocysteine (MetE route): step 1/1.</text>
</comment>
<comment type="similarity">
    <text evidence="1">Belongs to the vitamin-B12 independent methionine synthase family.</text>
</comment>
<accession>B0UU16</accession>
<feature type="chain" id="PRO_1000077114" description="5-methyltetrahydropteroyltriglutamate--homocysteine methyltransferase">
    <location>
        <begin position="1"/>
        <end position="757"/>
    </location>
</feature>
<feature type="active site" description="Proton donor" evidence="1">
    <location>
        <position position="696"/>
    </location>
</feature>
<feature type="binding site" evidence="1">
    <location>
        <begin position="16"/>
        <end position="19"/>
    </location>
    <ligand>
        <name>5-methyltetrahydropteroyltri-L-glutamate</name>
        <dbReference type="ChEBI" id="CHEBI:58207"/>
    </ligand>
</feature>
<feature type="binding site" evidence="1">
    <location>
        <position position="112"/>
    </location>
    <ligand>
        <name>5-methyltetrahydropteroyltri-L-glutamate</name>
        <dbReference type="ChEBI" id="CHEBI:58207"/>
    </ligand>
</feature>
<feature type="binding site" evidence="1">
    <location>
        <begin position="433"/>
        <end position="435"/>
    </location>
    <ligand>
        <name>L-homocysteine</name>
        <dbReference type="ChEBI" id="CHEBI:58199"/>
    </ligand>
</feature>
<feature type="binding site" evidence="1">
    <location>
        <begin position="433"/>
        <end position="435"/>
    </location>
    <ligand>
        <name>L-methionine</name>
        <dbReference type="ChEBI" id="CHEBI:57844"/>
    </ligand>
</feature>
<feature type="binding site" evidence="1">
    <location>
        <position position="486"/>
    </location>
    <ligand>
        <name>L-homocysteine</name>
        <dbReference type="ChEBI" id="CHEBI:58199"/>
    </ligand>
</feature>
<feature type="binding site" evidence="1">
    <location>
        <position position="486"/>
    </location>
    <ligand>
        <name>L-methionine</name>
        <dbReference type="ChEBI" id="CHEBI:57844"/>
    </ligand>
</feature>
<feature type="binding site" evidence="1">
    <location>
        <begin position="517"/>
        <end position="518"/>
    </location>
    <ligand>
        <name>5-methyltetrahydropteroyltri-L-glutamate</name>
        <dbReference type="ChEBI" id="CHEBI:58207"/>
    </ligand>
</feature>
<feature type="binding site" evidence="1">
    <location>
        <position position="563"/>
    </location>
    <ligand>
        <name>5-methyltetrahydropteroyltri-L-glutamate</name>
        <dbReference type="ChEBI" id="CHEBI:58207"/>
    </ligand>
</feature>
<feature type="binding site" evidence="1">
    <location>
        <position position="601"/>
    </location>
    <ligand>
        <name>L-homocysteine</name>
        <dbReference type="ChEBI" id="CHEBI:58199"/>
    </ligand>
</feature>
<feature type="binding site" evidence="1">
    <location>
        <position position="601"/>
    </location>
    <ligand>
        <name>L-methionine</name>
        <dbReference type="ChEBI" id="CHEBI:57844"/>
    </ligand>
</feature>
<feature type="binding site" evidence="1">
    <location>
        <position position="607"/>
    </location>
    <ligand>
        <name>5-methyltetrahydropteroyltri-L-glutamate</name>
        <dbReference type="ChEBI" id="CHEBI:58207"/>
    </ligand>
</feature>
<feature type="binding site" evidence="1">
    <location>
        <position position="643"/>
    </location>
    <ligand>
        <name>Zn(2+)</name>
        <dbReference type="ChEBI" id="CHEBI:29105"/>
        <note>catalytic</note>
    </ligand>
</feature>
<feature type="binding site" evidence="1">
    <location>
        <position position="645"/>
    </location>
    <ligand>
        <name>Zn(2+)</name>
        <dbReference type="ChEBI" id="CHEBI:29105"/>
        <note>catalytic</note>
    </ligand>
</feature>
<feature type="binding site" evidence="1">
    <location>
        <position position="667"/>
    </location>
    <ligand>
        <name>Zn(2+)</name>
        <dbReference type="ChEBI" id="CHEBI:29105"/>
        <note>catalytic</note>
    </ligand>
</feature>
<feature type="binding site" evidence="1">
    <location>
        <position position="728"/>
    </location>
    <ligand>
        <name>Zn(2+)</name>
        <dbReference type="ChEBI" id="CHEBI:29105"/>
        <note>catalytic</note>
    </ligand>
</feature>
<evidence type="ECO:0000255" key="1">
    <source>
        <dbReference type="HAMAP-Rule" id="MF_00172"/>
    </source>
</evidence>
<dbReference type="EC" id="2.1.1.14" evidence="1"/>
<dbReference type="EMBL" id="CP000947">
    <property type="protein sequence ID" value="ACA31024.1"/>
    <property type="molecule type" value="Genomic_DNA"/>
</dbReference>
<dbReference type="RefSeq" id="WP_012340450.1">
    <property type="nucleotide sequence ID" value="NC_010519.1"/>
</dbReference>
<dbReference type="SMR" id="B0UU16"/>
<dbReference type="STRING" id="228400.HSM_1293"/>
<dbReference type="GeneID" id="31487596"/>
<dbReference type="KEGG" id="hsm:HSM_1293"/>
<dbReference type="HOGENOM" id="CLU_013175_0_0_6"/>
<dbReference type="UniPathway" id="UPA00051">
    <property type="reaction ID" value="UER00082"/>
</dbReference>
<dbReference type="GO" id="GO:0003871">
    <property type="term" value="F:5-methyltetrahydropteroyltriglutamate-homocysteine S-methyltransferase activity"/>
    <property type="evidence" value="ECO:0007669"/>
    <property type="project" value="UniProtKB-UniRule"/>
</dbReference>
<dbReference type="GO" id="GO:0008270">
    <property type="term" value="F:zinc ion binding"/>
    <property type="evidence" value="ECO:0007669"/>
    <property type="project" value="InterPro"/>
</dbReference>
<dbReference type="GO" id="GO:0009086">
    <property type="term" value="P:methionine biosynthetic process"/>
    <property type="evidence" value="ECO:0007669"/>
    <property type="project" value="UniProtKB-UniRule"/>
</dbReference>
<dbReference type="GO" id="GO:0032259">
    <property type="term" value="P:methylation"/>
    <property type="evidence" value="ECO:0007669"/>
    <property type="project" value="UniProtKB-KW"/>
</dbReference>
<dbReference type="CDD" id="cd03311">
    <property type="entry name" value="CIMS_C_terminal_like"/>
    <property type="match status" value="1"/>
</dbReference>
<dbReference type="CDD" id="cd03312">
    <property type="entry name" value="CIMS_N_terminal_like"/>
    <property type="match status" value="1"/>
</dbReference>
<dbReference type="FunFam" id="3.20.20.210:FF:000002">
    <property type="entry name" value="5-methyltetrahydropteroyltriglutamate--homocysteine methyltransferase"/>
    <property type="match status" value="1"/>
</dbReference>
<dbReference type="Gene3D" id="3.20.20.210">
    <property type="match status" value="2"/>
</dbReference>
<dbReference type="HAMAP" id="MF_00172">
    <property type="entry name" value="Meth_synth"/>
    <property type="match status" value="1"/>
</dbReference>
<dbReference type="InterPro" id="IPR013215">
    <property type="entry name" value="Cbl-indep_Met_Synth_N"/>
</dbReference>
<dbReference type="InterPro" id="IPR006276">
    <property type="entry name" value="Cobalamin-indep_Met_synthase"/>
</dbReference>
<dbReference type="InterPro" id="IPR002629">
    <property type="entry name" value="Met_Synth_C/arc"/>
</dbReference>
<dbReference type="InterPro" id="IPR038071">
    <property type="entry name" value="UROD/MetE-like_sf"/>
</dbReference>
<dbReference type="NCBIfam" id="TIGR01371">
    <property type="entry name" value="met_syn_B12ind"/>
    <property type="match status" value="1"/>
</dbReference>
<dbReference type="NCBIfam" id="NF003556">
    <property type="entry name" value="PRK05222.1"/>
    <property type="match status" value="1"/>
</dbReference>
<dbReference type="PANTHER" id="PTHR30519">
    <property type="entry name" value="5-METHYLTETRAHYDROPTEROYLTRIGLUTAMATE--HOMOCYSTEINE METHYLTRANSFERASE"/>
    <property type="match status" value="1"/>
</dbReference>
<dbReference type="Pfam" id="PF08267">
    <property type="entry name" value="Meth_synt_1"/>
    <property type="match status" value="1"/>
</dbReference>
<dbReference type="Pfam" id="PF01717">
    <property type="entry name" value="Meth_synt_2"/>
    <property type="match status" value="1"/>
</dbReference>
<dbReference type="PIRSF" id="PIRSF000382">
    <property type="entry name" value="MeTrfase_B12_ind"/>
    <property type="match status" value="1"/>
</dbReference>
<dbReference type="SUPFAM" id="SSF51726">
    <property type="entry name" value="UROD/MetE-like"/>
    <property type="match status" value="2"/>
</dbReference>
<organism>
    <name type="scientific">Histophilus somni (strain 2336)</name>
    <name type="common">Haemophilus somnus</name>
    <dbReference type="NCBI Taxonomy" id="228400"/>
    <lineage>
        <taxon>Bacteria</taxon>
        <taxon>Pseudomonadati</taxon>
        <taxon>Pseudomonadota</taxon>
        <taxon>Gammaproteobacteria</taxon>
        <taxon>Pasteurellales</taxon>
        <taxon>Pasteurellaceae</taxon>
        <taxon>Histophilus</taxon>
    </lineage>
</organism>
<keyword id="KW-0028">Amino-acid biosynthesis</keyword>
<keyword id="KW-0479">Metal-binding</keyword>
<keyword id="KW-0486">Methionine biosynthesis</keyword>
<keyword id="KW-0489">Methyltransferase</keyword>
<keyword id="KW-0677">Repeat</keyword>
<keyword id="KW-0808">Transferase</keyword>
<keyword id="KW-0862">Zinc</keyword>
<reference key="1">
    <citation type="submission" date="2008-02" db="EMBL/GenBank/DDBJ databases">
        <title>Complete sequence of Haemophilus somnus 2336.</title>
        <authorList>
            <consortium name="US DOE Joint Genome Institute"/>
            <person name="Siddaramappa S."/>
            <person name="Duncan A.J."/>
            <person name="Challacombe J.F."/>
            <person name="Rainey D."/>
            <person name="Gillaspy A.F."/>
            <person name="Carson M."/>
            <person name="Gipson J."/>
            <person name="Gipson M."/>
            <person name="Bruce D."/>
            <person name="Detter J.C."/>
            <person name="Han C.S."/>
            <person name="Land M."/>
            <person name="Tapia R."/>
            <person name="Thompson L.S."/>
            <person name="Orvis J."/>
            <person name="Zaitshik J."/>
            <person name="Barnes G."/>
            <person name="Brettin T.S."/>
            <person name="Dyer D.W."/>
            <person name="Inzana T.J."/>
        </authorList>
    </citation>
    <scope>NUCLEOTIDE SEQUENCE [LARGE SCALE GENOMIC DNA]</scope>
    <source>
        <strain>2336</strain>
    </source>
</reference>